<evidence type="ECO:0000269" key="1">
    <source>
    </source>
</evidence>
<evidence type="ECO:0000269" key="2">
    <source>
    </source>
</evidence>
<evidence type="ECO:0000269" key="3">
    <source>
    </source>
</evidence>
<evidence type="ECO:0000303" key="4">
    <source>
    </source>
</evidence>
<evidence type="ECO:0000305" key="5"/>
<dbReference type="EC" id="6.2.1.51" evidence="3"/>
<dbReference type="EMBL" id="AL123456">
    <property type="protein sequence ID" value="CCP45754.1"/>
    <property type="molecule type" value="Genomic_DNA"/>
</dbReference>
<dbReference type="PIR" id="C70669">
    <property type="entry name" value="C70669"/>
</dbReference>
<dbReference type="RefSeq" id="NP_217466.3">
    <property type="nucleotide sequence ID" value="NC_000962.3"/>
</dbReference>
<dbReference type="RefSeq" id="WP_003899553.1">
    <property type="nucleotide sequence ID" value="NC_000962.3"/>
</dbReference>
<dbReference type="SMR" id="P95141"/>
<dbReference type="FunCoup" id="P95141">
    <property type="interactions" value="9"/>
</dbReference>
<dbReference type="STRING" id="83332.Rv2950c"/>
<dbReference type="SwissLipids" id="SLP:000000986"/>
<dbReference type="PaxDb" id="83332-Rv2950c"/>
<dbReference type="DNASU" id="887202"/>
<dbReference type="GeneID" id="887202"/>
<dbReference type="KEGG" id="mtu:Rv2950c"/>
<dbReference type="KEGG" id="mtv:RVBD_2950c"/>
<dbReference type="TubercuList" id="Rv2950c"/>
<dbReference type="eggNOG" id="COG0318">
    <property type="taxonomic scope" value="Bacteria"/>
</dbReference>
<dbReference type="InParanoid" id="P95141"/>
<dbReference type="OrthoDB" id="3671040at2"/>
<dbReference type="BRENDA" id="6.2.1.51">
    <property type="organism ID" value="3445"/>
</dbReference>
<dbReference type="UniPathway" id="UPA00094"/>
<dbReference type="Proteomes" id="UP000001584">
    <property type="component" value="Chromosome"/>
</dbReference>
<dbReference type="GO" id="GO:0016878">
    <property type="term" value="F:acid-thiol ligase activity"/>
    <property type="evidence" value="ECO:0000314"/>
    <property type="project" value="MTBBASE"/>
</dbReference>
<dbReference type="GO" id="GO:0070566">
    <property type="term" value="F:adenylyltransferase activity"/>
    <property type="evidence" value="ECO:0000314"/>
    <property type="project" value="MTBBASE"/>
</dbReference>
<dbReference type="GO" id="GO:0005524">
    <property type="term" value="F:ATP binding"/>
    <property type="evidence" value="ECO:0007669"/>
    <property type="project" value="UniProtKB-KW"/>
</dbReference>
<dbReference type="GO" id="GO:0016874">
    <property type="term" value="F:ligase activity"/>
    <property type="evidence" value="ECO:0000315"/>
    <property type="project" value="UniProtKB"/>
</dbReference>
<dbReference type="GO" id="GO:0071766">
    <property type="term" value="P:Actinobacterium-type cell wall biogenesis"/>
    <property type="evidence" value="ECO:0000314"/>
    <property type="project" value="MTBBASE"/>
</dbReference>
<dbReference type="GO" id="GO:0006633">
    <property type="term" value="P:fatty acid biosynthetic process"/>
    <property type="evidence" value="ECO:0000318"/>
    <property type="project" value="GO_Central"/>
</dbReference>
<dbReference type="GO" id="GO:0008610">
    <property type="term" value="P:lipid biosynthetic process"/>
    <property type="evidence" value="ECO:0000315"/>
    <property type="project" value="UniProtKB"/>
</dbReference>
<dbReference type="GO" id="GO:0097040">
    <property type="term" value="P:phthiocerol biosynthetic process"/>
    <property type="evidence" value="ECO:0000314"/>
    <property type="project" value="MTBBASE"/>
</dbReference>
<dbReference type="CDD" id="cd05931">
    <property type="entry name" value="FAAL"/>
    <property type="match status" value="1"/>
</dbReference>
<dbReference type="FunFam" id="3.30.300.30:FF:000016">
    <property type="entry name" value="Fatty-acid-CoA ligase FadD26"/>
    <property type="match status" value="1"/>
</dbReference>
<dbReference type="FunFam" id="3.40.50.12780:FF:000013">
    <property type="entry name" value="Long-chain-fatty-acid--AMP ligase FadD32"/>
    <property type="match status" value="1"/>
</dbReference>
<dbReference type="Gene3D" id="3.30.300.30">
    <property type="match status" value="1"/>
</dbReference>
<dbReference type="Gene3D" id="3.40.50.12780">
    <property type="entry name" value="N-terminal domain of ligase-like"/>
    <property type="match status" value="1"/>
</dbReference>
<dbReference type="InterPro" id="IPR025110">
    <property type="entry name" value="AMP-bd_C"/>
</dbReference>
<dbReference type="InterPro" id="IPR045851">
    <property type="entry name" value="AMP-bd_C_sf"/>
</dbReference>
<dbReference type="InterPro" id="IPR000873">
    <property type="entry name" value="AMP-dep_synth/lig_dom"/>
</dbReference>
<dbReference type="InterPro" id="IPR042099">
    <property type="entry name" value="ANL_N_sf"/>
</dbReference>
<dbReference type="InterPro" id="IPR040097">
    <property type="entry name" value="FAAL/FAAC"/>
</dbReference>
<dbReference type="NCBIfam" id="NF004509">
    <property type="entry name" value="PRK05850.1"/>
    <property type="match status" value="1"/>
</dbReference>
<dbReference type="PANTHER" id="PTHR22754:SF32">
    <property type="entry name" value="DISCO-INTERACTING PROTEIN 2"/>
    <property type="match status" value="1"/>
</dbReference>
<dbReference type="PANTHER" id="PTHR22754">
    <property type="entry name" value="DISCO-INTERACTING PROTEIN 2 DIP2 -RELATED"/>
    <property type="match status" value="1"/>
</dbReference>
<dbReference type="Pfam" id="PF00501">
    <property type="entry name" value="AMP-binding"/>
    <property type="match status" value="1"/>
</dbReference>
<dbReference type="Pfam" id="PF23024">
    <property type="entry name" value="AMP-dom_DIP2-like"/>
    <property type="match status" value="1"/>
</dbReference>
<dbReference type="SUPFAM" id="SSF56801">
    <property type="entry name" value="Acetyl-CoA synthetase-like"/>
    <property type="match status" value="1"/>
</dbReference>
<accession>P95141</accession>
<accession>L0TCQ6</accession>
<organism>
    <name type="scientific">Mycobacterium tuberculosis (strain ATCC 25618 / H37Rv)</name>
    <dbReference type="NCBI Taxonomy" id="83332"/>
    <lineage>
        <taxon>Bacteria</taxon>
        <taxon>Bacillati</taxon>
        <taxon>Actinomycetota</taxon>
        <taxon>Actinomycetes</taxon>
        <taxon>Mycobacteriales</taxon>
        <taxon>Mycobacteriaceae</taxon>
        <taxon>Mycobacterium</taxon>
        <taxon>Mycobacterium tuberculosis complex</taxon>
    </lineage>
</organism>
<gene>
    <name type="primary">fadD29</name>
    <name type="ordered locus">Rv2950c</name>
</gene>
<comment type="function">
    <text evidence="1 2 3">Catalyzes the activation of long-chain fatty acids as acyl-adenylates (acyl-AMP), which are then transferred to the multifunctional polyketide synthase PpsA for further chain extension (PubMed:15042094, PubMed:19182784, PubMed:20553505). Involved in the biosynthesis of phenolphthiocerol, which is an important intermediate in the biosynthesis of phenolic glycolipid (PGL), also called mycosid B (PubMed:20553505).</text>
</comment>
<comment type="catalytic activity">
    <reaction evidence="3">
        <text>17-(4-hydroxyphenyl)heptadecanoate + holo-[(phenol)carboxyphthiodiolenone synthase] + ATP = 17-(4-hydroxyphenyl)heptadecanoyl-[(phenol)carboxyphthiodiolenone synthase] + AMP + diphosphate</text>
        <dbReference type="Rhea" id="RHEA:55720"/>
        <dbReference type="Rhea" id="RHEA-COMP:14271"/>
        <dbReference type="Rhea" id="RHEA-COMP:14272"/>
        <dbReference type="ChEBI" id="CHEBI:30616"/>
        <dbReference type="ChEBI" id="CHEBI:33019"/>
        <dbReference type="ChEBI" id="CHEBI:64479"/>
        <dbReference type="ChEBI" id="CHEBI:91233"/>
        <dbReference type="ChEBI" id="CHEBI:133300"/>
        <dbReference type="ChEBI" id="CHEBI:456215"/>
        <dbReference type="EC" id="6.2.1.51"/>
    </reaction>
</comment>
<comment type="catalytic activity">
    <reaction evidence="3">
        <text>19-(4-hydroxyphenyl)nonadecanoate + holo-[(phenol)carboxyphthiodiolenone synthase] + ATP = 19-(4-hydroxyphenyl)nonadecanoyl-[(phenol)carboxyphthiodiolenone synthase] + AMP + diphosphate</text>
        <dbReference type="Rhea" id="RHEA:55728"/>
        <dbReference type="Rhea" id="RHEA-COMP:14271"/>
        <dbReference type="Rhea" id="RHEA-COMP:14273"/>
        <dbReference type="ChEBI" id="CHEBI:30616"/>
        <dbReference type="ChEBI" id="CHEBI:33019"/>
        <dbReference type="ChEBI" id="CHEBI:64479"/>
        <dbReference type="ChEBI" id="CHEBI:91236"/>
        <dbReference type="ChEBI" id="CHEBI:133301"/>
        <dbReference type="ChEBI" id="CHEBI:456215"/>
        <dbReference type="EC" id="6.2.1.51"/>
    </reaction>
</comment>
<comment type="catalytic activity">
    <reaction evidence="2 3">
        <text>dodecanoate + ATP + H(+) = dodecanoyl-AMP + diphosphate</text>
        <dbReference type="Rhea" id="RHEA:43712"/>
        <dbReference type="ChEBI" id="CHEBI:15378"/>
        <dbReference type="ChEBI" id="CHEBI:18262"/>
        <dbReference type="ChEBI" id="CHEBI:30616"/>
        <dbReference type="ChEBI" id="CHEBI:33019"/>
        <dbReference type="ChEBI" id="CHEBI:83623"/>
    </reaction>
    <physiologicalReaction direction="left-to-right" evidence="2 3">
        <dbReference type="Rhea" id="RHEA:43713"/>
    </physiologicalReaction>
</comment>
<comment type="pathway">
    <text evidence="3">Lipid metabolism; fatty acid biosynthesis.</text>
</comment>
<comment type="disruption phenotype">
    <text evidence="3">Disruption of the gene abolishes the production of phenolic glycolipid (PGL). Mutant can still produce phthiocerol dimycocerosate (DIM A) and phthiodiolone dimycocerosate (DIM B).</text>
</comment>
<comment type="similarity">
    <text evidence="5">Belongs to the ATP-dependent AMP-binding enzyme family.</text>
</comment>
<keyword id="KW-0067">ATP-binding</keyword>
<keyword id="KW-0276">Fatty acid metabolism</keyword>
<keyword id="KW-0436">Ligase</keyword>
<keyword id="KW-0443">Lipid metabolism</keyword>
<keyword id="KW-0547">Nucleotide-binding</keyword>
<keyword id="KW-1185">Reference proteome</keyword>
<sequence length="619" mass="67447">MKTNSSFHAAGEVATQPAWGTGEQAAQPLNGSTSRFAMSESSLADLLQKAASQYPNRAAYKFIDYDTDPAGFTETVTWWQVHRRAMIVAEELWIYASSGDRVAILAPQGLEYIIAFMGVLQAGLIAVPLPVPQFGIHDERISSALRDSAPSIILTTSSVIDEVTTYAPHACAAQGQSAPIVVAVDALDLSSSRALDPTRFERPSTAYLQYTSGSTRAPAGVVLSHKNVITNCVQLMSDYIGDSEKVPSTPVSWLPFYHDMGLMLGIILPMINQDTAVLMSPMAFLQRPARWMQLLAKHRAQISSAPNFGFELAVRRTSDDDMAGLDLGHVRTIVTGAERVNVATLRRFTERFAPFNLSETAIRPSYGLAEATVYVATAGPGRAPKSVCFDYQQLSVGQAKRAENGSEGANLVSYGAPRASTVRIVDPETRMENPAGTVGEIWVQGDNVGLGYWRNPQQTEATFRARLVTPSPGTSEGPWLRTGDLGVIFEGELFITGRIKELLVVDGANHYPEDIEATIQEITGGRVVAIAVPDDRTEKLVTIIELMKRGRTDEEEKNRLRTVKREVASAISRSHRLRVADVVMVAPGSIPVTTSGKVRRSASVERYLHHEFSRLDAMA</sequence>
<feature type="chain" id="PRO_0000406357" description="4-hydroxyphenylalkanoate adenylyltransferase">
    <location>
        <begin position="1"/>
        <end position="619"/>
    </location>
</feature>
<name>FAA29_MYCTU</name>
<protein>
    <recommendedName>
        <fullName evidence="5">4-hydroxyphenylalkanoate adenylyltransferase</fullName>
        <ecNumber evidence="3">6.2.1.51</ecNumber>
    </recommendedName>
    <alternativeName>
        <fullName>Acyl-AMP synthase</fullName>
    </alternativeName>
    <alternativeName>
        <fullName evidence="4">FAAL29</fullName>
    </alternativeName>
    <alternativeName>
        <fullName>Long-chain-fatty-acid--AMP ligase FadD29</fullName>
        <shortName>FAAL</shortName>
    </alternativeName>
</protein>
<reference key="1">
    <citation type="journal article" date="1998" name="Nature">
        <title>Deciphering the biology of Mycobacterium tuberculosis from the complete genome sequence.</title>
        <authorList>
            <person name="Cole S.T."/>
            <person name="Brosch R."/>
            <person name="Parkhill J."/>
            <person name="Garnier T."/>
            <person name="Churcher C.M."/>
            <person name="Harris D.E."/>
            <person name="Gordon S.V."/>
            <person name="Eiglmeier K."/>
            <person name="Gas S."/>
            <person name="Barry C.E. III"/>
            <person name="Tekaia F."/>
            <person name="Badcock K."/>
            <person name="Basham D."/>
            <person name="Brown D."/>
            <person name="Chillingworth T."/>
            <person name="Connor R."/>
            <person name="Davies R.M."/>
            <person name="Devlin K."/>
            <person name="Feltwell T."/>
            <person name="Gentles S."/>
            <person name="Hamlin N."/>
            <person name="Holroyd S."/>
            <person name="Hornsby T."/>
            <person name="Jagels K."/>
            <person name="Krogh A."/>
            <person name="McLean J."/>
            <person name="Moule S."/>
            <person name="Murphy L.D."/>
            <person name="Oliver S."/>
            <person name="Osborne J."/>
            <person name="Quail M.A."/>
            <person name="Rajandream M.A."/>
            <person name="Rogers J."/>
            <person name="Rutter S."/>
            <person name="Seeger K."/>
            <person name="Skelton S."/>
            <person name="Squares S."/>
            <person name="Squares R."/>
            <person name="Sulston J.E."/>
            <person name="Taylor K."/>
            <person name="Whitehead S."/>
            <person name="Barrell B.G."/>
        </authorList>
    </citation>
    <scope>NUCLEOTIDE SEQUENCE [LARGE SCALE GENOMIC DNA]</scope>
    <source>
        <strain>ATCC 25618 / H37Rv</strain>
    </source>
</reference>
<reference key="2">
    <citation type="journal article" date="2004" name="Nature">
        <title>Enzymic activation and transfer of fatty acids as acyl-adenylates in mycobacteria.</title>
        <authorList>
            <person name="Trivedi O.A."/>
            <person name="Arora P."/>
            <person name="Sridharan V."/>
            <person name="Tickoo R."/>
            <person name="Mohanty D."/>
            <person name="Gokhale R.S."/>
        </authorList>
    </citation>
    <scope>FUNCTION AS AN ACYL-AMP SYNTHASE</scope>
    <source>
        <strain>ATCC 25618 / H37Rv</strain>
    </source>
</reference>
<reference key="3">
    <citation type="journal article" date="2009" name="Nat. Chem. Biol.">
        <title>Mechanistic and functional insights into fatty acid activation in Mycobacterium tuberculosis.</title>
        <authorList>
            <person name="Arora P."/>
            <person name="Goyal A."/>
            <person name="Natarajan V.T."/>
            <person name="Rajakumara E."/>
            <person name="Verma P."/>
            <person name="Gupta R."/>
            <person name="Yousuf M."/>
            <person name="Trivedi O.A."/>
            <person name="Mohanty D."/>
            <person name="Tyagi A."/>
            <person name="Sankaranarayanan R."/>
            <person name="Gokhale R.S."/>
        </authorList>
    </citation>
    <scope>FUNCTION IN FATTY ACID ACTIVATION</scope>
    <scope>CATALYTIC ACTIVITY</scope>
</reference>
<reference key="4">
    <citation type="journal article" date="2010" name="FEBS J.">
        <title>Delineation of the roles of FadD22, FadD26 and FadD29 in the biosynthesis of phthiocerol dimycocerosates and related compounds in Mycobacterium tuberculosis.</title>
        <authorList>
            <person name="Simeone R."/>
            <person name="Leger M."/>
            <person name="Constant P."/>
            <person name="Malaga W."/>
            <person name="Marrakchi H."/>
            <person name="Daffe M."/>
            <person name="Guilhot C."/>
            <person name="Chalut C."/>
        </authorList>
    </citation>
    <scope>FUNCTION IN THE BIOSYNTHESIS OF PHENOLIC GLYCOLIPID</scope>
    <scope>CATALYTIC ACTIVITY</scope>
    <scope>PATHWAY</scope>
    <scope>DISRUPTION PHENOTYPE</scope>
    <source>
        <strain>ATCC 25618 / H37Rv</strain>
    </source>
</reference>
<reference key="5">
    <citation type="journal article" date="2011" name="Mol. Cell. Proteomics">
        <title>Proteogenomic analysis of Mycobacterium tuberculosis by high resolution mass spectrometry.</title>
        <authorList>
            <person name="Kelkar D.S."/>
            <person name="Kumar D."/>
            <person name="Kumar P."/>
            <person name="Balakrishnan L."/>
            <person name="Muthusamy B."/>
            <person name="Yadav A.K."/>
            <person name="Shrivastava P."/>
            <person name="Marimuthu A."/>
            <person name="Anand S."/>
            <person name="Sundaram H."/>
            <person name="Kingsbury R."/>
            <person name="Harsha H.C."/>
            <person name="Nair B."/>
            <person name="Prasad T.S."/>
            <person name="Chauhan D.S."/>
            <person name="Katoch K."/>
            <person name="Katoch V.M."/>
            <person name="Kumar P."/>
            <person name="Chaerkady R."/>
            <person name="Ramachandran S."/>
            <person name="Dash D."/>
            <person name="Pandey A."/>
        </authorList>
    </citation>
    <scope>IDENTIFICATION BY MASS SPECTROMETRY [LARGE SCALE ANALYSIS]</scope>
    <source>
        <strain>ATCC 25618 / H37Rv</strain>
    </source>
</reference>
<proteinExistence type="evidence at protein level"/>